<reference key="1">
    <citation type="submission" date="2007-06" db="EMBL/GenBank/DDBJ databases">
        <authorList>
            <person name="Dodson R.J."/>
            <person name="Harkins D."/>
            <person name="Paulsen I.T."/>
        </authorList>
    </citation>
    <scope>NUCLEOTIDE SEQUENCE [LARGE SCALE GENOMIC DNA]</scope>
    <source>
        <strain>DSM 24068 / PA7</strain>
    </source>
</reference>
<dbReference type="EC" id="2.7.7.18" evidence="1"/>
<dbReference type="EMBL" id="CP000744">
    <property type="protein sequence ID" value="ABR84471.1"/>
    <property type="molecule type" value="Genomic_DNA"/>
</dbReference>
<dbReference type="RefSeq" id="WP_003153394.1">
    <property type="nucleotide sequence ID" value="NC_009656.1"/>
</dbReference>
<dbReference type="SMR" id="A6V0A4"/>
<dbReference type="GeneID" id="77219449"/>
<dbReference type="KEGG" id="pap:PSPA7_1103"/>
<dbReference type="HOGENOM" id="CLU_069765_0_0_6"/>
<dbReference type="UniPathway" id="UPA00253">
    <property type="reaction ID" value="UER00332"/>
</dbReference>
<dbReference type="Proteomes" id="UP000001582">
    <property type="component" value="Chromosome"/>
</dbReference>
<dbReference type="GO" id="GO:0005524">
    <property type="term" value="F:ATP binding"/>
    <property type="evidence" value="ECO:0007669"/>
    <property type="project" value="UniProtKB-KW"/>
</dbReference>
<dbReference type="GO" id="GO:0004515">
    <property type="term" value="F:nicotinate-nucleotide adenylyltransferase activity"/>
    <property type="evidence" value="ECO:0007669"/>
    <property type="project" value="UniProtKB-UniRule"/>
</dbReference>
<dbReference type="GO" id="GO:0009435">
    <property type="term" value="P:NAD biosynthetic process"/>
    <property type="evidence" value="ECO:0007669"/>
    <property type="project" value="UniProtKB-UniRule"/>
</dbReference>
<dbReference type="CDD" id="cd02165">
    <property type="entry name" value="NMNAT"/>
    <property type="match status" value="1"/>
</dbReference>
<dbReference type="Gene3D" id="3.40.50.620">
    <property type="entry name" value="HUPs"/>
    <property type="match status" value="1"/>
</dbReference>
<dbReference type="HAMAP" id="MF_00244">
    <property type="entry name" value="NaMN_adenylyltr"/>
    <property type="match status" value="1"/>
</dbReference>
<dbReference type="InterPro" id="IPR004821">
    <property type="entry name" value="Cyt_trans-like"/>
</dbReference>
<dbReference type="InterPro" id="IPR005248">
    <property type="entry name" value="NadD/NMNAT"/>
</dbReference>
<dbReference type="InterPro" id="IPR014729">
    <property type="entry name" value="Rossmann-like_a/b/a_fold"/>
</dbReference>
<dbReference type="NCBIfam" id="TIGR00125">
    <property type="entry name" value="cyt_tran_rel"/>
    <property type="match status" value="1"/>
</dbReference>
<dbReference type="NCBIfam" id="TIGR00482">
    <property type="entry name" value="nicotinate (nicotinamide) nucleotide adenylyltransferase"/>
    <property type="match status" value="1"/>
</dbReference>
<dbReference type="NCBIfam" id="NF000839">
    <property type="entry name" value="PRK00071.1-1"/>
    <property type="match status" value="1"/>
</dbReference>
<dbReference type="NCBIfam" id="NF000840">
    <property type="entry name" value="PRK00071.1-3"/>
    <property type="match status" value="1"/>
</dbReference>
<dbReference type="PANTHER" id="PTHR39321">
    <property type="entry name" value="NICOTINATE-NUCLEOTIDE ADENYLYLTRANSFERASE-RELATED"/>
    <property type="match status" value="1"/>
</dbReference>
<dbReference type="PANTHER" id="PTHR39321:SF3">
    <property type="entry name" value="PHOSPHOPANTETHEINE ADENYLYLTRANSFERASE"/>
    <property type="match status" value="1"/>
</dbReference>
<dbReference type="Pfam" id="PF01467">
    <property type="entry name" value="CTP_transf_like"/>
    <property type="match status" value="1"/>
</dbReference>
<dbReference type="SUPFAM" id="SSF52374">
    <property type="entry name" value="Nucleotidylyl transferase"/>
    <property type="match status" value="1"/>
</dbReference>
<proteinExistence type="inferred from homology"/>
<keyword id="KW-0067">ATP-binding</keyword>
<keyword id="KW-0520">NAD</keyword>
<keyword id="KW-0547">Nucleotide-binding</keyword>
<keyword id="KW-0548">Nucleotidyltransferase</keyword>
<keyword id="KW-0662">Pyridine nucleotide biosynthesis</keyword>
<keyword id="KW-0808">Transferase</keyword>
<comment type="function">
    <text evidence="1">Catalyzes the reversible adenylation of nicotinate mononucleotide (NaMN) to nicotinic acid adenine dinucleotide (NaAD).</text>
</comment>
<comment type="catalytic activity">
    <reaction evidence="1">
        <text>nicotinate beta-D-ribonucleotide + ATP + H(+) = deamido-NAD(+) + diphosphate</text>
        <dbReference type="Rhea" id="RHEA:22860"/>
        <dbReference type="ChEBI" id="CHEBI:15378"/>
        <dbReference type="ChEBI" id="CHEBI:30616"/>
        <dbReference type="ChEBI" id="CHEBI:33019"/>
        <dbReference type="ChEBI" id="CHEBI:57502"/>
        <dbReference type="ChEBI" id="CHEBI:58437"/>
        <dbReference type="EC" id="2.7.7.18"/>
    </reaction>
</comment>
<comment type="pathway">
    <text evidence="1">Cofactor biosynthesis; NAD(+) biosynthesis; deamido-NAD(+) from nicotinate D-ribonucleotide: step 1/1.</text>
</comment>
<comment type="similarity">
    <text evidence="1">Belongs to the NadD family.</text>
</comment>
<protein>
    <recommendedName>
        <fullName evidence="1">Probable nicotinate-nucleotide adenylyltransferase</fullName>
        <ecNumber evidence="1">2.7.7.18</ecNumber>
    </recommendedName>
    <alternativeName>
        <fullName evidence="1">Deamido-NAD(+) diphosphorylase</fullName>
    </alternativeName>
    <alternativeName>
        <fullName evidence="1">Deamido-NAD(+) pyrophosphorylase</fullName>
    </alternativeName>
    <alternativeName>
        <fullName evidence="1">Nicotinate mononucleotide adenylyltransferase</fullName>
        <shortName evidence="1">NaMN adenylyltransferase</shortName>
    </alternativeName>
</protein>
<name>NADD_PSEP7</name>
<sequence length="214" mass="23799">MGKRIGLFGGTFDPVHIGHMRSAVEMAEQFALDELRLLPNARPPHRDAPQVSAAQRLAMVERAVAGVERLTVDARELLRDKPSYTIDTLESVRAELAADDQLFMLIGWDAFCGLPTWHRWEALLEHCHIIVLQRPDADSEPPEALRDLLAARSVADPRALKGPGGQITFVWQTPLAVSATQIRALLGNGRSVRFLVPDAVLNYIEAHHLYRAPH</sequence>
<evidence type="ECO:0000255" key="1">
    <source>
        <dbReference type="HAMAP-Rule" id="MF_00244"/>
    </source>
</evidence>
<accession>A6V0A4</accession>
<feature type="chain" id="PRO_1000044687" description="Probable nicotinate-nucleotide adenylyltransferase">
    <location>
        <begin position="1"/>
        <end position="214"/>
    </location>
</feature>
<organism>
    <name type="scientific">Pseudomonas paraeruginosa (strain DSM 24068 / PA7)</name>
    <name type="common">Pseudomonas aeruginosa (strain PA7)</name>
    <dbReference type="NCBI Taxonomy" id="381754"/>
    <lineage>
        <taxon>Bacteria</taxon>
        <taxon>Pseudomonadati</taxon>
        <taxon>Pseudomonadota</taxon>
        <taxon>Gammaproteobacteria</taxon>
        <taxon>Pseudomonadales</taxon>
        <taxon>Pseudomonadaceae</taxon>
        <taxon>Pseudomonas</taxon>
        <taxon>Pseudomonas paraeruginosa</taxon>
    </lineage>
</organism>
<gene>
    <name evidence="1" type="primary">nadD</name>
    <name type="ordered locus">PSPA7_1103</name>
</gene>